<comment type="subcellular location">
    <subcellularLocation>
        <location evidence="2">Cell membrane</location>
        <topology evidence="2">Multi-pass membrane protein</topology>
    </subcellularLocation>
</comment>
<comment type="similarity">
    <text evidence="2">Belongs to the DoxX family.</text>
</comment>
<protein>
    <recommendedName>
        <fullName>Uncharacterized protein HI_1602</fullName>
    </recommendedName>
</protein>
<accession>P44270</accession>
<dbReference type="EMBL" id="L42023">
    <property type="protein sequence ID" value="AAC23261.1"/>
    <property type="molecule type" value="Genomic_DNA"/>
</dbReference>
<dbReference type="PIR" id="A64038">
    <property type="entry name" value="A64038"/>
</dbReference>
<dbReference type="RefSeq" id="NP_439744.2">
    <property type="nucleotide sequence ID" value="NC_000907.1"/>
</dbReference>
<dbReference type="STRING" id="71421.HI_1602"/>
<dbReference type="EnsemblBacteria" id="AAC23261">
    <property type="protein sequence ID" value="AAC23261"/>
    <property type="gene ID" value="HI_1602"/>
</dbReference>
<dbReference type="KEGG" id="hin:HI_1602"/>
<dbReference type="PATRIC" id="fig|71421.8.peg.1675"/>
<dbReference type="eggNOG" id="COG2259">
    <property type="taxonomic scope" value="Bacteria"/>
</dbReference>
<dbReference type="HOGENOM" id="CLU_058421_7_4_6"/>
<dbReference type="OrthoDB" id="5689076at2"/>
<dbReference type="PhylomeDB" id="P44270"/>
<dbReference type="Proteomes" id="UP000000579">
    <property type="component" value="Chromosome"/>
</dbReference>
<dbReference type="GO" id="GO:0005886">
    <property type="term" value="C:plasma membrane"/>
    <property type="evidence" value="ECO:0000318"/>
    <property type="project" value="GO_Central"/>
</dbReference>
<dbReference type="InterPro" id="IPR032808">
    <property type="entry name" value="DoxX"/>
</dbReference>
<dbReference type="InterPro" id="IPR051907">
    <property type="entry name" value="DoxX-like_oxidoreductase"/>
</dbReference>
<dbReference type="PANTHER" id="PTHR33452:SF7">
    <property type="entry name" value="DOXX FAMILY PROTEIN"/>
    <property type="match status" value="1"/>
</dbReference>
<dbReference type="PANTHER" id="PTHR33452">
    <property type="entry name" value="OXIDOREDUCTASE CATD-RELATED"/>
    <property type="match status" value="1"/>
</dbReference>
<dbReference type="Pfam" id="PF07681">
    <property type="entry name" value="DoxX"/>
    <property type="match status" value="1"/>
</dbReference>
<proteinExistence type="inferred from homology"/>
<name>Y1602_HAEIN</name>
<gene>
    <name type="ordered locus">HI_1602</name>
</gene>
<reference key="1">
    <citation type="journal article" date="1995" name="Science">
        <title>Whole-genome random sequencing and assembly of Haemophilus influenzae Rd.</title>
        <authorList>
            <person name="Fleischmann R.D."/>
            <person name="Adams M.D."/>
            <person name="White O."/>
            <person name="Clayton R.A."/>
            <person name="Kirkness E.F."/>
            <person name="Kerlavage A.R."/>
            <person name="Bult C.J."/>
            <person name="Tomb J.-F."/>
            <person name="Dougherty B.A."/>
            <person name="Merrick J.M."/>
            <person name="McKenney K."/>
            <person name="Sutton G.G."/>
            <person name="FitzHugh W."/>
            <person name="Fields C.A."/>
            <person name="Gocayne J.D."/>
            <person name="Scott J.D."/>
            <person name="Shirley R."/>
            <person name="Liu L.-I."/>
            <person name="Glodek A."/>
            <person name="Kelley J.M."/>
            <person name="Weidman J.F."/>
            <person name="Phillips C.A."/>
            <person name="Spriggs T."/>
            <person name="Hedblom E."/>
            <person name="Cotton M.D."/>
            <person name="Utterback T.R."/>
            <person name="Hanna M.C."/>
            <person name="Nguyen D.T."/>
            <person name="Saudek D.M."/>
            <person name="Brandon R.C."/>
            <person name="Fine L.D."/>
            <person name="Fritchman J.L."/>
            <person name="Fuhrmann J.L."/>
            <person name="Geoghagen N.S.M."/>
            <person name="Gnehm C.L."/>
            <person name="McDonald L.A."/>
            <person name="Small K.V."/>
            <person name="Fraser C.M."/>
            <person name="Smith H.O."/>
            <person name="Venter J.C."/>
        </authorList>
    </citation>
    <scope>NUCLEOTIDE SEQUENCE [LARGE SCALE GENOMIC DNA]</scope>
    <source>
        <strain>ATCC 51907 / DSM 11121 / KW20 / Rd</strain>
    </source>
</reference>
<keyword id="KW-1003">Cell membrane</keyword>
<keyword id="KW-0472">Membrane</keyword>
<keyword id="KW-1185">Reference proteome</keyword>
<keyword id="KW-0812">Transmembrane</keyword>
<keyword id="KW-1133">Transmembrane helix</keyword>
<organism>
    <name type="scientific">Haemophilus influenzae (strain ATCC 51907 / DSM 11121 / KW20 / Rd)</name>
    <dbReference type="NCBI Taxonomy" id="71421"/>
    <lineage>
        <taxon>Bacteria</taxon>
        <taxon>Pseudomonadati</taxon>
        <taxon>Pseudomonadota</taxon>
        <taxon>Gammaproteobacteria</taxon>
        <taxon>Pasteurellales</taxon>
        <taxon>Pasteurellaceae</taxon>
        <taxon>Haemophilus</taxon>
    </lineage>
</organism>
<evidence type="ECO:0000255" key="1"/>
<evidence type="ECO:0000305" key="2"/>
<sequence length="151" mass="17217">MKDCKMQGIGSGVSLLILRFFLAWEFFESGLEKWNGQNWFAEIQDRFPFPFNLIPADINWHVAMGSELIFPFLLIFGVLTRFSALSLTILISVAWYSIHADSGYNVCDNGYKLPLIYVVTLLILITQGAGKLSLDTLIKKVYPTKSWLKFL</sequence>
<feature type="chain" id="PRO_0000078098" description="Uncharacterized protein HI_1602">
    <location>
        <begin position="1"/>
        <end position="151"/>
    </location>
</feature>
<feature type="transmembrane region" description="Helical" evidence="1">
    <location>
        <begin position="8"/>
        <end position="28"/>
    </location>
</feature>
<feature type="transmembrane region" description="Helical" evidence="1">
    <location>
        <begin position="60"/>
        <end position="80"/>
    </location>
</feature>
<feature type="transmembrane region" description="Helical" evidence="1">
    <location>
        <begin position="82"/>
        <end position="102"/>
    </location>
</feature>
<feature type="transmembrane region" description="Helical" evidence="1">
    <location>
        <begin position="113"/>
        <end position="133"/>
    </location>
</feature>